<name>ACTN_ACTDE</name>
<sequence>MGLPKSFVSMSLLFFSTLLILSLAFNAKNLTQRTNDEVKAMYESWLIKYGKSYNSLGEWERRFEIFKETLRFIDEHNADTNRSYKVGLNQFADLTDEEFRSTYLGFTSGSNKTKVSNRYEPRVGQVLPSYVDWRSAGAVVDIKSQGECGGCWAFSAIATVEGINKIVTGVLISLSEQELIDCGRTQNTRGCNGGYITDGFQFIINNGGINTEENYPYTAQDGECNLDLQNEKYVTIDTYENVPYNNEWALQTAVTYQPVSVALDAAGDAFKHYSSGIFTGPCGTAIDHAVTIVGYGTEGGIDYWIVKNSWDTTWGEEGYMRILRNVGGAGTCGIATMPSYPVKYNNQNHPKPYSSLINPPAFSMSKDGPVGVDDGQRYSA</sequence>
<accession>A5HII1</accession>
<accession>Q43367</accession>
<accession>Q96227</accession>
<protein>
    <recommendedName>
        <fullName evidence="1 14">Actinidain</fullName>
        <shortName evidence="1 14">Actinidin</shortName>
        <ecNumber evidence="1">3.4.22.14</ecNumber>
    </recommendedName>
    <alternativeName>
        <fullName>Allergen Act d 1</fullName>
    </alternativeName>
    <allergenName>Act d 1</allergenName>
</protein>
<keyword id="KW-0020">Allergen</keyword>
<keyword id="KW-0903">Direct protein sequencing</keyword>
<keyword id="KW-1015">Disulfide bond</keyword>
<keyword id="KW-0325">Glycoprotein</keyword>
<keyword id="KW-0378">Hydrolase</keyword>
<keyword id="KW-0645">Protease</keyword>
<keyword id="KW-0732">Signal</keyword>
<keyword id="KW-0788">Thiol protease</keyword>
<keyword id="KW-0865">Zymogen</keyword>
<proteinExistence type="evidence at protein level"/>
<feature type="signal peptide" evidence="2">
    <location>
        <begin position="1"/>
        <end position="24"/>
    </location>
</feature>
<feature type="propeptide" id="PRO_0000343461" description="Activation peptide" evidence="7 8 9">
    <location>
        <begin position="25"/>
        <end position="126"/>
    </location>
</feature>
<feature type="chain" id="PRO_0000343462" description="Actinidain" evidence="9">
    <location>
        <begin position="127"/>
        <end position="380"/>
    </location>
</feature>
<feature type="active site" evidence="4">
    <location>
        <position position="151"/>
    </location>
</feature>
<feature type="active site" evidence="5">
    <location>
        <position position="288"/>
    </location>
</feature>
<feature type="active site" evidence="6">
    <location>
        <position position="308"/>
    </location>
</feature>
<feature type="glycosylation site" description="N-linked (GlcNAc...) asparagine" evidence="3">
    <location>
        <position position="29"/>
    </location>
</feature>
<feature type="glycosylation site" description="N-linked (GlcNAc...) asparagine" evidence="3">
    <location>
        <position position="81"/>
    </location>
</feature>
<feature type="glycosylation site" description="N-linked (GlcNAc...) asparagine" evidence="3">
    <location>
        <position position="111"/>
    </location>
</feature>
<feature type="disulfide bond" evidence="1">
    <location>
        <begin position="148"/>
        <end position="191"/>
    </location>
</feature>
<feature type="disulfide bond" evidence="1">
    <location>
        <begin position="182"/>
        <end position="224"/>
    </location>
</feature>
<feature type="disulfide bond" evidence="1">
    <location>
        <begin position="282"/>
        <end position="332"/>
    </location>
</feature>
<feature type="sequence conflict" description="In Ref. 5; AAA32630." evidence="11" ref="5">
    <original>D</original>
    <variation>G</variation>
    <location>
        <position position="96"/>
    </location>
</feature>
<feature type="sequence conflict" description="In Ref. 5; AAA32630." evidence="11" ref="5">
    <original>S</original>
    <variation>G</variation>
    <location>
        <position position="108"/>
    </location>
</feature>
<feature type="sequence conflict" description="In Ref. 5; AAA32630." evidence="11" ref="5">
    <original>V</original>
    <variation>F</variation>
    <location>
        <position position="123"/>
    </location>
</feature>
<feature type="sequence conflict" description="In Ref. 5; AAA32630." evidence="11" ref="5">
    <original>G</original>
    <variation>S</variation>
    <location>
        <position position="124"/>
    </location>
</feature>
<feature type="sequence conflict" description="In Ref. 5; AAA32630." evidence="11" ref="5">
    <original>D</original>
    <variation>G</variation>
    <location>
        <position position="181"/>
    </location>
</feature>
<feature type="sequence conflict" description="In Ref. 5; AAA32630." evidence="11" ref="5">
    <original>R</original>
    <variation>G</variation>
    <location>
        <position position="184"/>
    </location>
</feature>
<feature type="sequence conflict" description="In Ref. 5; AAA32630." evidence="11" ref="5">
    <original>E</original>
    <variation>G</variation>
    <location>
        <position position="212"/>
    </location>
</feature>
<feature type="sequence conflict" description="In Ref. 2; AAA32629." evidence="11" ref="2">
    <original>LD</original>
    <variation>VE</variation>
    <location>
        <begin position="226"/>
        <end position="227"/>
    </location>
</feature>
<feature type="sequence conflict" description="In Ref. 5; AAA32630." evidence="11" ref="5">
    <original>E</original>
    <variation>G</variation>
    <location>
        <position position="240"/>
    </location>
</feature>
<feature type="sequence conflict" description="In Ref. 2; AAA32629." evidence="11" ref="2">
    <original>H</original>
    <variation>Q</variation>
    <location>
        <position position="272"/>
    </location>
</feature>
<feature type="sequence conflict" description="In Ref. 5; AAA32630." evidence="11" ref="5">
    <original>K</original>
    <variation>E</variation>
    <location>
        <position position="307"/>
    </location>
</feature>
<feature type="sequence conflict" description="In Ref. 2; AAA32629 and 5; AAA32630." evidence="11" ref="2 5">
    <original>H</original>
    <variation>Y</variation>
    <location>
        <position position="349"/>
    </location>
</feature>
<feature type="sequence conflict" description="In Ref. 2; AAA32629." evidence="11" ref="2">
    <original>K</original>
    <variation>E</variation>
    <location>
        <position position="351"/>
    </location>
</feature>
<feature type="sequence conflict" description="In Ref. 5; AAA32630." evidence="11" ref="5">
    <original>P</original>
    <variation>S</variation>
    <location>
        <position position="360"/>
    </location>
</feature>
<feature type="sequence conflict" description="In Ref. 2; AAA32629 and 5; AAA32630." evidence="11" ref="2 5">
    <original>D</original>
    <variation>E</variation>
    <location>
        <position position="373"/>
    </location>
</feature>
<dbReference type="EC" id="3.4.22.14" evidence="1"/>
<dbReference type="EMBL" id="X16466">
    <property type="protein sequence ID" value="CAA34486.1"/>
    <property type="molecule type" value="mRNA"/>
</dbReference>
<dbReference type="EMBL" id="M38422">
    <property type="protein sequence ID" value="AAA32629.1"/>
    <property type="molecule type" value="Genomic_DNA"/>
</dbReference>
<dbReference type="EMBL" id="EF530131">
    <property type="protein sequence ID" value="ABQ10189.1"/>
    <property type="molecule type" value="mRNA"/>
</dbReference>
<dbReference type="EMBL" id="X57551">
    <property type="protein sequence ID" value="CAA40778.1"/>
    <property type="molecule type" value="Genomic_DNA"/>
</dbReference>
<dbReference type="EMBL" id="M21335">
    <property type="protein sequence ID" value="AAA32630.1"/>
    <property type="status" value="ALT_FRAME"/>
    <property type="molecule type" value="mRNA"/>
</dbReference>
<dbReference type="SMR" id="A5HII1"/>
<dbReference type="Allergome" id="1">
    <property type="allergen name" value="Act d 1"/>
</dbReference>
<dbReference type="MEROPS" id="C01.007"/>
<dbReference type="MEROPS" id="I29.003"/>
<dbReference type="BRENDA" id="3.4.22.14">
    <property type="organism ID" value="121"/>
</dbReference>
<dbReference type="GO" id="GO:0004197">
    <property type="term" value="F:cysteine-type endopeptidase activity"/>
    <property type="evidence" value="ECO:0007669"/>
    <property type="project" value="UniProtKB-EC"/>
</dbReference>
<dbReference type="GO" id="GO:0006508">
    <property type="term" value="P:proteolysis"/>
    <property type="evidence" value="ECO:0007669"/>
    <property type="project" value="UniProtKB-KW"/>
</dbReference>
<dbReference type="CDD" id="cd02248">
    <property type="entry name" value="Peptidase_C1A"/>
    <property type="match status" value="1"/>
</dbReference>
<dbReference type="FunFam" id="3.90.70.10:FF:000068">
    <property type="entry name" value="Cysteine protease 1"/>
    <property type="match status" value="1"/>
</dbReference>
<dbReference type="Gene3D" id="1.10.287.2250">
    <property type="match status" value="1"/>
</dbReference>
<dbReference type="Gene3D" id="3.90.70.10">
    <property type="entry name" value="Cysteine proteinases"/>
    <property type="match status" value="1"/>
</dbReference>
<dbReference type="InterPro" id="IPR038765">
    <property type="entry name" value="Papain-like_cys_pep_sf"/>
</dbReference>
<dbReference type="InterPro" id="IPR025661">
    <property type="entry name" value="Pept_asp_AS"/>
</dbReference>
<dbReference type="InterPro" id="IPR000169">
    <property type="entry name" value="Pept_cys_AS"/>
</dbReference>
<dbReference type="InterPro" id="IPR025660">
    <property type="entry name" value="Pept_his_AS"/>
</dbReference>
<dbReference type="InterPro" id="IPR013128">
    <property type="entry name" value="Peptidase_C1A"/>
</dbReference>
<dbReference type="InterPro" id="IPR000668">
    <property type="entry name" value="Peptidase_C1A_C"/>
</dbReference>
<dbReference type="InterPro" id="IPR039417">
    <property type="entry name" value="Peptidase_C1A_papain-like"/>
</dbReference>
<dbReference type="InterPro" id="IPR013201">
    <property type="entry name" value="Prot_inhib_I29"/>
</dbReference>
<dbReference type="PANTHER" id="PTHR12411">
    <property type="entry name" value="CYSTEINE PROTEASE FAMILY C1-RELATED"/>
    <property type="match status" value="1"/>
</dbReference>
<dbReference type="Pfam" id="PF08246">
    <property type="entry name" value="Inhibitor_I29"/>
    <property type="match status" value="1"/>
</dbReference>
<dbReference type="Pfam" id="PF00112">
    <property type="entry name" value="Peptidase_C1"/>
    <property type="match status" value="1"/>
</dbReference>
<dbReference type="PRINTS" id="PR00705">
    <property type="entry name" value="PAPAIN"/>
</dbReference>
<dbReference type="SMART" id="SM00848">
    <property type="entry name" value="Inhibitor_I29"/>
    <property type="match status" value="1"/>
</dbReference>
<dbReference type="SMART" id="SM00645">
    <property type="entry name" value="Pept_C1"/>
    <property type="match status" value="1"/>
</dbReference>
<dbReference type="SUPFAM" id="SSF54001">
    <property type="entry name" value="Cysteine proteinases"/>
    <property type="match status" value="1"/>
</dbReference>
<dbReference type="PROSITE" id="PS00640">
    <property type="entry name" value="THIOL_PROTEASE_ASN"/>
    <property type="match status" value="1"/>
</dbReference>
<dbReference type="PROSITE" id="PS00139">
    <property type="entry name" value="THIOL_PROTEASE_CYS"/>
    <property type="match status" value="1"/>
</dbReference>
<dbReference type="PROSITE" id="PS00639">
    <property type="entry name" value="THIOL_PROTEASE_HIS"/>
    <property type="match status" value="1"/>
</dbReference>
<organism>
    <name type="scientific">Actinidia deliciosa</name>
    <name type="common">Kiwi</name>
    <dbReference type="NCBI Taxonomy" id="3627"/>
    <lineage>
        <taxon>Eukaryota</taxon>
        <taxon>Viridiplantae</taxon>
        <taxon>Streptophyta</taxon>
        <taxon>Embryophyta</taxon>
        <taxon>Tracheophyta</taxon>
        <taxon>Spermatophyta</taxon>
        <taxon>Magnoliopsida</taxon>
        <taxon>eudicotyledons</taxon>
        <taxon>Gunneridae</taxon>
        <taxon>Pentapetalae</taxon>
        <taxon>asterids</taxon>
        <taxon>Ericales</taxon>
        <taxon>Actinidiaceae</taxon>
        <taxon>Actinidia</taxon>
    </lineage>
</organism>
<evidence type="ECO:0000250" key="1">
    <source>
        <dbReference type="UniProtKB" id="P00785"/>
    </source>
</evidence>
<evidence type="ECO:0000255" key="2"/>
<evidence type="ECO:0000255" key="3">
    <source>
        <dbReference type="PROSITE-ProRule" id="PRU00498"/>
    </source>
</evidence>
<evidence type="ECO:0000255" key="4">
    <source>
        <dbReference type="PROSITE-ProRule" id="PRU10088"/>
    </source>
</evidence>
<evidence type="ECO:0000255" key="5">
    <source>
        <dbReference type="PROSITE-ProRule" id="PRU10089"/>
    </source>
</evidence>
<evidence type="ECO:0000255" key="6">
    <source>
        <dbReference type="PROSITE-ProRule" id="PRU10090"/>
    </source>
</evidence>
<evidence type="ECO:0000269" key="7">
    <source>
    </source>
</evidence>
<evidence type="ECO:0000269" key="8">
    <source>
    </source>
</evidence>
<evidence type="ECO:0000269" key="9">
    <source>
    </source>
</evidence>
<evidence type="ECO:0000269" key="10">
    <source ref="3"/>
</evidence>
<evidence type="ECO:0000305" key="11"/>
<evidence type="ECO:0000312" key="12">
    <source>
        <dbReference type="EMBL" id="AAA32629.1"/>
    </source>
</evidence>
<evidence type="ECO:0000312" key="13">
    <source>
        <dbReference type="EMBL" id="AAA32630.1"/>
    </source>
</evidence>
<evidence type="ECO:0000312" key="14">
    <source>
        <dbReference type="EMBL" id="ABQ10189.1"/>
    </source>
</evidence>
<comment type="function">
    <text evidence="9">Cysteine protease responsible for the cleavage of kiwellin into kissper and KiTH.</text>
</comment>
<comment type="catalytic activity">
    <reaction evidence="1">
        <text>Specificity close to that of papain.</text>
        <dbReference type="EC" id="3.4.22.14"/>
    </reaction>
</comment>
<comment type="tissue specificity">
    <text evidence="10">Fruit, present in small cells of the outer pericarp of mature fruit, but not large cells.</text>
</comment>
<comment type="developmental stage">
    <text evidence="10">Expressed in ripening fruit, levels are highest at the harvest of fruit and decrease as the fruit ripens.</text>
</comment>
<comment type="allergen">
    <text evidence="7 8">Causes an allergic reaction in human. Binds IgE.</text>
</comment>
<comment type="similarity">
    <text evidence="4 5 6">Belongs to the peptidase C1 family.</text>
</comment>
<comment type="sequence caution" evidence="11">
    <conflict type="frameshift">
        <sequence resource="EMBL-CDS" id="AAA32630"/>
    </conflict>
</comment>
<reference evidence="11" key="1">
    <citation type="journal article" date="1989" name="Nucleic Acids Res.">
        <title>Nucleotide sequence of actinidin, a kiwi fruit protease.</title>
        <authorList>
            <person name="Podivinsky E."/>
            <person name="Forster R.L.S."/>
            <person name="Gardner R.C."/>
        </authorList>
    </citation>
    <scope>NUCLEOTIDE SEQUENCE [MRNA]</scope>
</reference>
<reference evidence="12" key="2">
    <citation type="journal article" date="1990" name="Nucleic Acids Res.">
        <title>Nucleotide sequence of an actinidin genomic clone.</title>
        <authorList>
            <person name="Snowden K.C."/>
            <person name="Gardner R.C."/>
        </authorList>
    </citation>
    <scope>NUCLEOTIDE SEQUENCE [GENOMIC DNA]</scope>
    <source>
        <strain evidence="12">cv. Hayward</strain>
    </source>
</reference>
<reference evidence="11 14" key="3">
    <citation type="journal article" date="2007" name="Funct. Plant Biol.">
        <title>Identification and characterisation of acidic and novel basic forms of actinidin, the highly abundant cysteine protease from kiwifruit.</title>
        <authorList>
            <person name="Nieuwenhuizen N.J."/>
            <person name="Beuning L.L."/>
            <person name="Sutherland P.W."/>
            <person name="Sharma N.N."/>
            <person name="Cooney J.M."/>
            <person name="Bieleski L.R.F."/>
            <person name="Schroeder R."/>
            <person name="MacRae E.A."/>
            <person name="Atkinson R.G."/>
        </authorList>
    </citation>
    <scope>NUCLEOTIDE SEQUENCE [MRNA]</scope>
    <scope>TISSUE SPECIFICITY</scope>
    <scope>DEVELOPMENTAL STAGE</scope>
    <source>
        <strain evidence="10">cv. Hayward</strain>
    </source>
</reference>
<reference evidence="11" key="4">
    <citation type="journal article" date="1990" name="Plant Mol. Biol.">
        <title>Nucleotide sequence of the promoter region from kiwifruit actinidin genes.</title>
        <authorList>
            <person name="Keeling J."/>
            <person name="Maxwell P."/>
            <person name="Gardner R.C."/>
        </authorList>
    </citation>
    <scope>NUCLEOTIDE SEQUENCE [GENOMIC DNA] OF 1-13</scope>
</reference>
<reference evidence="11 13" key="5">
    <citation type="submission" date="1996-10" db="EMBL/GenBank/DDBJ databases">
        <authorList>
            <person name="Praekelt U.M."/>
            <person name="McKee R.A."/>
            <person name="Smith H."/>
        </authorList>
    </citation>
    <scope>NUCLEOTIDE SEQUENCE [MRNA] OF 70-380</scope>
    <source>
        <strain>cv. Exbury</strain>
    </source>
</reference>
<reference evidence="11" key="6">
    <citation type="journal article" date="2008" name="J. Agric. Food Chem.">
        <title>Kiwellin, a modular protein from green and gold kiwi fruits: evidence of in vivo and in vitro processing and IgE binding.</title>
        <authorList>
            <person name="Tuppo L."/>
            <person name="Giangrieco I."/>
            <person name="Palazzo P."/>
            <person name="Bernardi M.L."/>
            <person name="Scala E."/>
            <person name="Carratore V."/>
            <person name="Tamburrini M."/>
            <person name="Mari A."/>
            <person name="Ciardiello M.A."/>
        </authorList>
    </citation>
    <scope>PROTEIN SEQUENCE OF 127-136</scope>
    <scope>FUNCTION</scope>
    <source>
        <strain evidence="9">cv. Hayward</strain>
        <tissue evidence="9">Fruit</tissue>
    </source>
</reference>
<reference evidence="11" key="7">
    <citation type="journal article" date="2004" name="J. Allergy Clin. Immunol.">
        <title>IgE sensitization profiles toward green and gold kiwifruits differ among patients allergic to kiwifruit from 3 European countries.</title>
        <authorList>
            <person name="Bublin M."/>
            <person name="Mari A."/>
            <person name="Ebner C."/>
            <person name="Knulst A."/>
            <person name="Scheiner O."/>
            <person name="Hoffmann-Sommergruber K."/>
            <person name="Breiteneder H."/>
            <person name="Radauer C."/>
        </authorList>
    </citation>
    <scope>PROTEIN SEQUENCE OF 127-131</scope>
    <scope>ALLERGEN</scope>
    <source>
        <strain evidence="7">cv. Hayward</strain>
        <tissue evidence="7">Fruit</tissue>
    </source>
</reference>
<reference evidence="11" key="8">
    <citation type="journal article" date="2008" name="Clin. Exp. Allergy">
        <title>Immunoglobulin E recognition patterns to purified Kiwifruit (Actinidinia deliciosa) allergens in patients sensitized to Kiwi with different clinical symptoms.</title>
        <authorList>
            <person name="Palacin A."/>
            <person name="Rodriguez J."/>
            <person name="Blanco C."/>
            <person name="Lopez-Torrejon G."/>
            <person name="Sanchez-Monge R."/>
            <person name="Varela J."/>
            <person name="Jimenez M.A."/>
            <person name="Cumplido J."/>
            <person name="Carrillo T."/>
            <person name="Crespo J.F."/>
            <person name="Salcedo G."/>
        </authorList>
    </citation>
    <scope>PROTEIN SEQUENCE OF 127-131</scope>
    <scope>ALLERGEN</scope>
    <source>
        <strain evidence="8">cv. Hayward</strain>
        <tissue evidence="8">Fruit</tissue>
    </source>
</reference>